<feature type="chain" id="PRO_1000194064" description="Large ribosomal subunit protein bL33">
    <location>
        <begin position="1"/>
        <end position="55"/>
    </location>
</feature>
<gene>
    <name evidence="1" type="primary">rpmG</name>
    <name type="ordered locus">VCM66_0207</name>
</gene>
<reference key="1">
    <citation type="journal article" date="2008" name="PLoS ONE">
        <title>A recalibrated molecular clock and independent origins for the cholera pandemic clones.</title>
        <authorList>
            <person name="Feng L."/>
            <person name="Reeves P.R."/>
            <person name="Lan R."/>
            <person name="Ren Y."/>
            <person name="Gao C."/>
            <person name="Zhou Z."/>
            <person name="Ren Y."/>
            <person name="Cheng J."/>
            <person name="Wang W."/>
            <person name="Wang J."/>
            <person name="Qian W."/>
            <person name="Li D."/>
            <person name="Wang L."/>
        </authorList>
    </citation>
    <scope>NUCLEOTIDE SEQUENCE [LARGE SCALE GENOMIC DNA]</scope>
    <source>
        <strain>M66-2</strain>
    </source>
</reference>
<organism>
    <name type="scientific">Vibrio cholerae serotype O1 (strain M66-2)</name>
    <dbReference type="NCBI Taxonomy" id="579112"/>
    <lineage>
        <taxon>Bacteria</taxon>
        <taxon>Pseudomonadati</taxon>
        <taxon>Pseudomonadota</taxon>
        <taxon>Gammaproteobacteria</taxon>
        <taxon>Vibrionales</taxon>
        <taxon>Vibrionaceae</taxon>
        <taxon>Vibrio</taxon>
    </lineage>
</organism>
<comment type="similarity">
    <text evidence="1">Belongs to the bacterial ribosomal protein bL33 family.</text>
</comment>
<name>RL33_VIBCM</name>
<keyword id="KW-0687">Ribonucleoprotein</keyword>
<keyword id="KW-0689">Ribosomal protein</keyword>
<dbReference type="EMBL" id="CP001233">
    <property type="protein sequence ID" value="ACP04539.1"/>
    <property type="molecule type" value="Genomic_DNA"/>
</dbReference>
<dbReference type="RefSeq" id="WP_001051801.1">
    <property type="nucleotide sequence ID" value="NC_012578.1"/>
</dbReference>
<dbReference type="SMR" id="C3LQI1"/>
<dbReference type="GeneID" id="93953789"/>
<dbReference type="KEGG" id="vcm:VCM66_0207"/>
<dbReference type="HOGENOM" id="CLU_190949_1_1_6"/>
<dbReference type="Proteomes" id="UP000001217">
    <property type="component" value="Chromosome I"/>
</dbReference>
<dbReference type="GO" id="GO:0022625">
    <property type="term" value="C:cytosolic large ribosomal subunit"/>
    <property type="evidence" value="ECO:0007669"/>
    <property type="project" value="TreeGrafter"/>
</dbReference>
<dbReference type="GO" id="GO:0003735">
    <property type="term" value="F:structural constituent of ribosome"/>
    <property type="evidence" value="ECO:0007669"/>
    <property type="project" value="InterPro"/>
</dbReference>
<dbReference type="GO" id="GO:0006412">
    <property type="term" value="P:translation"/>
    <property type="evidence" value="ECO:0007669"/>
    <property type="project" value="UniProtKB-UniRule"/>
</dbReference>
<dbReference type="FunFam" id="2.20.28.120:FF:000001">
    <property type="entry name" value="50S ribosomal protein L33"/>
    <property type="match status" value="1"/>
</dbReference>
<dbReference type="Gene3D" id="2.20.28.120">
    <property type="entry name" value="Ribosomal protein L33"/>
    <property type="match status" value="1"/>
</dbReference>
<dbReference type="HAMAP" id="MF_00294">
    <property type="entry name" value="Ribosomal_bL33"/>
    <property type="match status" value="1"/>
</dbReference>
<dbReference type="InterPro" id="IPR001705">
    <property type="entry name" value="Ribosomal_bL33"/>
</dbReference>
<dbReference type="InterPro" id="IPR018264">
    <property type="entry name" value="Ribosomal_bL33_CS"/>
</dbReference>
<dbReference type="InterPro" id="IPR038584">
    <property type="entry name" value="Ribosomal_bL33_sf"/>
</dbReference>
<dbReference type="InterPro" id="IPR011332">
    <property type="entry name" value="Ribosomal_zn-bd"/>
</dbReference>
<dbReference type="NCBIfam" id="NF001860">
    <property type="entry name" value="PRK00595.1"/>
    <property type="match status" value="1"/>
</dbReference>
<dbReference type="NCBIfam" id="TIGR01023">
    <property type="entry name" value="rpmG_bact"/>
    <property type="match status" value="1"/>
</dbReference>
<dbReference type="PANTHER" id="PTHR15238">
    <property type="entry name" value="54S RIBOSOMAL PROTEIN L39, MITOCHONDRIAL"/>
    <property type="match status" value="1"/>
</dbReference>
<dbReference type="PANTHER" id="PTHR15238:SF1">
    <property type="entry name" value="LARGE RIBOSOMAL SUBUNIT PROTEIN BL33M"/>
    <property type="match status" value="1"/>
</dbReference>
<dbReference type="Pfam" id="PF00471">
    <property type="entry name" value="Ribosomal_L33"/>
    <property type="match status" value="1"/>
</dbReference>
<dbReference type="SUPFAM" id="SSF57829">
    <property type="entry name" value="Zn-binding ribosomal proteins"/>
    <property type="match status" value="1"/>
</dbReference>
<dbReference type="PROSITE" id="PS00582">
    <property type="entry name" value="RIBOSOMAL_L33"/>
    <property type="match status" value="1"/>
</dbReference>
<proteinExistence type="inferred from homology"/>
<sequence>MAKGIREKIRLVSSAGTGHFYTTDKNKRNMPGKFEIKKYDPVVRQHVVYKEAKIK</sequence>
<protein>
    <recommendedName>
        <fullName evidence="1">Large ribosomal subunit protein bL33</fullName>
    </recommendedName>
    <alternativeName>
        <fullName evidence="2">50S ribosomal protein L33</fullName>
    </alternativeName>
</protein>
<evidence type="ECO:0000255" key="1">
    <source>
        <dbReference type="HAMAP-Rule" id="MF_00294"/>
    </source>
</evidence>
<evidence type="ECO:0000305" key="2"/>
<accession>C3LQI1</accession>